<reference key="1">
    <citation type="journal article" date="2009" name="J. Bacteriol.">
        <title>Genome sequences of three Agrobacterium biovars help elucidate the evolution of multichromosome genomes in bacteria.</title>
        <authorList>
            <person name="Slater S.C."/>
            <person name="Goldman B.S."/>
            <person name="Goodner B."/>
            <person name="Setubal J.C."/>
            <person name="Farrand S.K."/>
            <person name="Nester E.W."/>
            <person name="Burr T.J."/>
            <person name="Banta L."/>
            <person name="Dickerman A.W."/>
            <person name="Paulsen I."/>
            <person name="Otten L."/>
            <person name="Suen G."/>
            <person name="Welch R."/>
            <person name="Almeida N.F."/>
            <person name="Arnold F."/>
            <person name="Burton O.T."/>
            <person name="Du Z."/>
            <person name="Ewing A."/>
            <person name="Godsy E."/>
            <person name="Heisel S."/>
            <person name="Houmiel K.L."/>
            <person name="Jhaveri J."/>
            <person name="Lu J."/>
            <person name="Miller N.M."/>
            <person name="Norton S."/>
            <person name="Chen Q."/>
            <person name="Phoolcharoen W."/>
            <person name="Ohlin V."/>
            <person name="Ondrusek D."/>
            <person name="Pride N."/>
            <person name="Stricklin S.L."/>
            <person name="Sun J."/>
            <person name="Wheeler C."/>
            <person name="Wilson L."/>
            <person name="Zhu H."/>
            <person name="Wood D.W."/>
        </authorList>
    </citation>
    <scope>NUCLEOTIDE SEQUENCE [LARGE SCALE GENOMIC DNA]</scope>
    <source>
        <strain>ATCC BAA-846 / DSM 112012 / S4</strain>
    </source>
</reference>
<feature type="chain" id="PRO_1000149347" description="3-isopropylmalate dehydratase large subunit">
    <location>
        <begin position="1"/>
        <end position="469"/>
    </location>
</feature>
<feature type="binding site" evidence="1">
    <location>
        <position position="350"/>
    </location>
    <ligand>
        <name>[4Fe-4S] cluster</name>
        <dbReference type="ChEBI" id="CHEBI:49883"/>
    </ligand>
</feature>
<feature type="binding site" evidence="1">
    <location>
        <position position="410"/>
    </location>
    <ligand>
        <name>[4Fe-4S] cluster</name>
        <dbReference type="ChEBI" id="CHEBI:49883"/>
    </ligand>
</feature>
<feature type="binding site" evidence="1">
    <location>
        <position position="413"/>
    </location>
    <ligand>
        <name>[4Fe-4S] cluster</name>
        <dbReference type="ChEBI" id="CHEBI:49883"/>
    </ligand>
</feature>
<proteinExistence type="inferred from homology"/>
<keyword id="KW-0004">4Fe-4S</keyword>
<keyword id="KW-0028">Amino-acid biosynthesis</keyword>
<keyword id="KW-0100">Branched-chain amino acid biosynthesis</keyword>
<keyword id="KW-0408">Iron</keyword>
<keyword id="KW-0411">Iron-sulfur</keyword>
<keyword id="KW-0432">Leucine biosynthesis</keyword>
<keyword id="KW-0456">Lyase</keyword>
<keyword id="KW-0479">Metal-binding</keyword>
<keyword id="KW-1185">Reference proteome</keyword>
<accession>B9JUD6</accession>
<organism>
    <name type="scientific">Allorhizobium ampelinum (strain ATCC BAA-846 / DSM 112012 / S4)</name>
    <name type="common">Agrobacterium vitis (strain S4)</name>
    <dbReference type="NCBI Taxonomy" id="311402"/>
    <lineage>
        <taxon>Bacteria</taxon>
        <taxon>Pseudomonadati</taxon>
        <taxon>Pseudomonadota</taxon>
        <taxon>Alphaproteobacteria</taxon>
        <taxon>Hyphomicrobiales</taxon>
        <taxon>Rhizobiaceae</taxon>
        <taxon>Rhizobium/Agrobacterium group</taxon>
        <taxon>Allorhizobium</taxon>
        <taxon>Allorhizobium ampelinum</taxon>
    </lineage>
</organism>
<dbReference type="EC" id="4.2.1.33" evidence="1"/>
<dbReference type="EMBL" id="CP000633">
    <property type="protein sequence ID" value="ACM38059.1"/>
    <property type="molecule type" value="Genomic_DNA"/>
</dbReference>
<dbReference type="RefSeq" id="WP_015917470.1">
    <property type="nucleotide sequence ID" value="NC_011989.1"/>
</dbReference>
<dbReference type="SMR" id="B9JUD6"/>
<dbReference type="STRING" id="311402.Avi_4223"/>
<dbReference type="KEGG" id="avi:Avi_4223"/>
<dbReference type="eggNOG" id="COG0065">
    <property type="taxonomic scope" value="Bacteria"/>
</dbReference>
<dbReference type="HOGENOM" id="CLU_006714_3_4_5"/>
<dbReference type="UniPathway" id="UPA00048">
    <property type="reaction ID" value="UER00071"/>
</dbReference>
<dbReference type="Proteomes" id="UP000001596">
    <property type="component" value="Chromosome 1"/>
</dbReference>
<dbReference type="GO" id="GO:0003861">
    <property type="term" value="F:3-isopropylmalate dehydratase activity"/>
    <property type="evidence" value="ECO:0007669"/>
    <property type="project" value="UniProtKB-UniRule"/>
</dbReference>
<dbReference type="GO" id="GO:0051539">
    <property type="term" value="F:4 iron, 4 sulfur cluster binding"/>
    <property type="evidence" value="ECO:0007669"/>
    <property type="project" value="UniProtKB-KW"/>
</dbReference>
<dbReference type="GO" id="GO:0046872">
    <property type="term" value="F:metal ion binding"/>
    <property type="evidence" value="ECO:0007669"/>
    <property type="project" value="UniProtKB-KW"/>
</dbReference>
<dbReference type="GO" id="GO:0009098">
    <property type="term" value="P:L-leucine biosynthetic process"/>
    <property type="evidence" value="ECO:0007669"/>
    <property type="project" value="UniProtKB-UniRule"/>
</dbReference>
<dbReference type="CDD" id="cd01583">
    <property type="entry name" value="IPMI"/>
    <property type="match status" value="1"/>
</dbReference>
<dbReference type="FunFam" id="3.30.499.10:FF:000006">
    <property type="entry name" value="3-isopropylmalate dehydratase large subunit"/>
    <property type="match status" value="1"/>
</dbReference>
<dbReference type="FunFam" id="3.30.499.10:FF:000007">
    <property type="entry name" value="3-isopropylmalate dehydratase large subunit"/>
    <property type="match status" value="1"/>
</dbReference>
<dbReference type="Gene3D" id="3.30.499.10">
    <property type="entry name" value="Aconitase, domain 3"/>
    <property type="match status" value="2"/>
</dbReference>
<dbReference type="HAMAP" id="MF_01026">
    <property type="entry name" value="LeuC_type1"/>
    <property type="match status" value="1"/>
</dbReference>
<dbReference type="InterPro" id="IPR004430">
    <property type="entry name" value="3-IsopropMal_deHydase_lsu"/>
</dbReference>
<dbReference type="InterPro" id="IPR015931">
    <property type="entry name" value="Acnase/IPM_dHydase_lsu_aba_1/3"/>
</dbReference>
<dbReference type="InterPro" id="IPR001030">
    <property type="entry name" value="Acoase/IPM_deHydtase_lsu_aba"/>
</dbReference>
<dbReference type="InterPro" id="IPR018136">
    <property type="entry name" value="Aconitase_4Fe-4S_BS"/>
</dbReference>
<dbReference type="InterPro" id="IPR036008">
    <property type="entry name" value="Aconitase_4Fe-4S_dom"/>
</dbReference>
<dbReference type="InterPro" id="IPR050067">
    <property type="entry name" value="IPM_dehydratase_rel_enz"/>
</dbReference>
<dbReference type="InterPro" id="IPR033941">
    <property type="entry name" value="IPMI_cat"/>
</dbReference>
<dbReference type="NCBIfam" id="TIGR00170">
    <property type="entry name" value="leuC"/>
    <property type="match status" value="1"/>
</dbReference>
<dbReference type="NCBIfam" id="NF004016">
    <property type="entry name" value="PRK05478.1"/>
    <property type="match status" value="1"/>
</dbReference>
<dbReference type="NCBIfam" id="NF009116">
    <property type="entry name" value="PRK12466.1"/>
    <property type="match status" value="1"/>
</dbReference>
<dbReference type="PANTHER" id="PTHR43822:SF9">
    <property type="entry name" value="3-ISOPROPYLMALATE DEHYDRATASE"/>
    <property type="match status" value="1"/>
</dbReference>
<dbReference type="PANTHER" id="PTHR43822">
    <property type="entry name" value="HOMOACONITASE, MITOCHONDRIAL-RELATED"/>
    <property type="match status" value="1"/>
</dbReference>
<dbReference type="Pfam" id="PF00330">
    <property type="entry name" value="Aconitase"/>
    <property type="match status" value="1"/>
</dbReference>
<dbReference type="PRINTS" id="PR00415">
    <property type="entry name" value="ACONITASE"/>
</dbReference>
<dbReference type="SUPFAM" id="SSF53732">
    <property type="entry name" value="Aconitase iron-sulfur domain"/>
    <property type="match status" value="1"/>
</dbReference>
<dbReference type="PROSITE" id="PS00450">
    <property type="entry name" value="ACONITASE_1"/>
    <property type="match status" value="1"/>
</dbReference>
<dbReference type="PROSITE" id="PS01244">
    <property type="entry name" value="ACONITASE_2"/>
    <property type="match status" value="1"/>
</dbReference>
<name>LEUC_ALLAM</name>
<evidence type="ECO:0000255" key="1">
    <source>
        <dbReference type="HAMAP-Rule" id="MF_01026"/>
    </source>
</evidence>
<comment type="function">
    <text evidence="1">Catalyzes the isomerization between 2-isopropylmalate and 3-isopropylmalate, via the formation of 2-isopropylmaleate.</text>
</comment>
<comment type="catalytic activity">
    <reaction evidence="1">
        <text>(2R,3S)-3-isopropylmalate = (2S)-2-isopropylmalate</text>
        <dbReference type="Rhea" id="RHEA:32287"/>
        <dbReference type="ChEBI" id="CHEBI:1178"/>
        <dbReference type="ChEBI" id="CHEBI:35121"/>
        <dbReference type="EC" id="4.2.1.33"/>
    </reaction>
</comment>
<comment type="cofactor">
    <cofactor evidence="1">
        <name>[4Fe-4S] cluster</name>
        <dbReference type="ChEBI" id="CHEBI:49883"/>
    </cofactor>
    <text evidence="1">Binds 1 [4Fe-4S] cluster per subunit.</text>
</comment>
<comment type="pathway">
    <text evidence="1">Amino-acid biosynthesis; L-leucine biosynthesis; L-leucine from 3-methyl-2-oxobutanoate: step 2/4.</text>
</comment>
<comment type="subunit">
    <text evidence="1">Heterodimer of LeuC and LeuD.</text>
</comment>
<comment type="similarity">
    <text evidence="1">Belongs to the aconitase/IPM isomerase family. LeuC type 1 subfamily.</text>
</comment>
<gene>
    <name evidence="1" type="primary">leuC</name>
    <name type="ordered locus">Avi_4223</name>
</gene>
<sequence length="469" mass="50819">MSAPRTLYDKIFDDHLVDRQDDGTCLLYIDRHLVHEVTSPQAFEGLRMAGRKVHAPTRTLAVVDHNVPTTPDRAEGIKNEESRIQVEALAKNAADFGVEYYSEKDKRQGIVHIVGPEQGFTLPGMTIVCGDSHTSTHGAFGALAHGIGTSEVEHVLATQTLIQKKAKNMLVRVDGKLPAGVTAKDIILAIIGEIGTAGGTGHVIEFAGEAIEALSMEGRMTVCNMTIEGGARAGLIAPDEKTFEYIKGKPRAPKGEELEMALQYWKTLHTDEGAHFDRTVVLDAANLPPIVSWGSSPEDVISVQGVVPNPDDIADENKRTSKWRALDYMGLKPGTKITDITIDRVFIGSCTNGRIEDLRAAAAVLKDRKVASTVSAMVVPGSGLVKEQAEAEGLDKIFLDAGCEWREPGCSMCLAMNDDRLKPEERCASTSNRNFEGRQGYKGRTHLVSPAMAAAAAIAGHFVDIREWK</sequence>
<protein>
    <recommendedName>
        <fullName evidence="1">3-isopropylmalate dehydratase large subunit</fullName>
        <ecNumber evidence="1">4.2.1.33</ecNumber>
    </recommendedName>
    <alternativeName>
        <fullName evidence="1">Alpha-IPM isomerase</fullName>
        <shortName evidence="1">IPMI</shortName>
    </alternativeName>
    <alternativeName>
        <fullName evidence="1">Isopropylmalate isomerase</fullName>
    </alternativeName>
</protein>